<evidence type="ECO:0000255" key="1">
    <source>
        <dbReference type="HAMAP-Rule" id="MF_00671"/>
    </source>
</evidence>
<dbReference type="EMBL" id="AE017282">
    <property type="protein sequence ID" value="AAU92500.1"/>
    <property type="molecule type" value="Genomic_DNA"/>
</dbReference>
<dbReference type="RefSeq" id="WP_010960513.1">
    <property type="nucleotide sequence ID" value="NC_002977.6"/>
</dbReference>
<dbReference type="SMR" id="Q609K4"/>
<dbReference type="STRING" id="243233.MCA1229"/>
<dbReference type="GeneID" id="88223514"/>
<dbReference type="KEGG" id="mca:MCA1229"/>
<dbReference type="eggNOG" id="COG0823">
    <property type="taxonomic scope" value="Bacteria"/>
</dbReference>
<dbReference type="HOGENOM" id="CLU_047123_0_0_6"/>
<dbReference type="Proteomes" id="UP000006821">
    <property type="component" value="Chromosome"/>
</dbReference>
<dbReference type="GO" id="GO:0042597">
    <property type="term" value="C:periplasmic space"/>
    <property type="evidence" value="ECO:0007669"/>
    <property type="project" value="UniProtKB-SubCell"/>
</dbReference>
<dbReference type="GO" id="GO:0051301">
    <property type="term" value="P:cell division"/>
    <property type="evidence" value="ECO:0007669"/>
    <property type="project" value="UniProtKB-UniRule"/>
</dbReference>
<dbReference type="GO" id="GO:0017038">
    <property type="term" value="P:protein import"/>
    <property type="evidence" value="ECO:0007669"/>
    <property type="project" value="InterPro"/>
</dbReference>
<dbReference type="Gene3D" id="2.120.10.30">
    <property type="entry name" value="TolB, C-terminal domain"/>
    <property type="match status" value="1"/>
</dbReference>
<dbReference type="Gene3D" id="3.40.50.10070">
    <property type="entry name" value="TolB, N-terminal domain"/>
    <property type="match status" value="1"/>
</dbReference>
<dbReference type="HAMAP" id="MF_00671">
    <property type="entry name" value="TolB"/>
    <property type="match status" value="1"/>
</dbReference>
<dbReference type="InterPro" id="IPR011042">
    <property type="entry name" value="6-blade_b-propeller_TolB-like"/>
</dbReference>
<dbReference type="InterPro" id="IPR011659">
    <property type="entry name" value="PD40"/>
</dbReference>
<dbReference type="InterPro" id="IPR014167">
    <property type="entry name" value="Tol-Pal_TolB"/>
</dbReference>
<dbReference type="InterPro" id="IPR007195">
    <property type="entry name" value="TolB_N"/>
</dbReference>
<dbReference type="NCBIfam" id="TIGR02800">
    <property type="entry name" value="propeller_TolB"/>
    <property type="match status" value="1"/>
</dbReference>
<dbReference type="PANTHER" id="PTHR36842:SF1">
    <property type="entry name" value="PROTEIN TOLB"/>
    <property type="match status" value="1"/>
</dbReference>
<dbReference type="PANTHER" id="PTHR36842">
    <property type="entry name" value="PROTEIN TOLB HOMOLOG"/>
    <property type="match status" value="1"/>
</dbReference>
<dbReference type="Pfam" id="PF07676">
    <property type="entry name" value="PD40"/>
    <property type="match status" value="5"/>
</dbReference>
<dbReference type="Pfam" id="PF04052">
    <property type="entry name" value="TolB_N"/>
    <property type="match status" value="1"/>
</dbReference>
<dbReference type="SUPFAM" id="SSF52964">
    <property type="entry name" value="TolB, N-terminal domain"/>
    <property type="match status" value="1"/>
</dbReference>
<dbReference type="SUPFAM" id="SSF69304">
    <property type="entry name" value="Tricorn protease N-terminal domain"/>
    <property type="match status" value="1"/>
</dbReference>
<protein>
    <recommendedName>
        <fullName evidence="1">Tol-Pal system protein TolB</fullName>
    </recommendedName>
</protein>
<reference key="1">
    <citation type="journal article" date="2004" name="PLoS Biol.">
        <title>Genomic insights into methanotrophy: the complete genome sequence of Methylococcus capsulatus (Bath).</title>
        <authorList>
            <person name="Ward N.L."/>
            <person name="Larsen O."/>
            <person name="Sakwa J."/>
            <person name="Bruseth L."/>
            <person name="Khouri H.M."/>
            <person name="Durkin A.S."/>
            <person name="Dimitrov G."/>
            <person name="Jiang L."/>
            <person name="Scanlan D."/>
            <person name="Kang K.H."/>
            <person name="Lewis M.R."/>
            <person name="Nelson K.E."/>
            <person name="Methe B.A."/>
            <person name="Wu M."/>
            <person name="Heidelberg J.F."/>
            <person name="Paulsen I.T."/>
            <person name="Fouts D.E."/>
            <person name="Ravel J."/>
            <person name="Tettelin H."/>
            <person name="Ren Q."/>
            <person name="Read T.D."/>
            <person name="DeBoy R.T."/>
            <person name="Seshadri R."/>
            <person name="Salzberg S.L."/>
            <person name="Jensen H.B."/>
            <person name="Birkeland N.K."/>
            <person name="Nelson W.C."/>
            <person name="Dodson R.J."/>
            <person name="Grindhaug S.H."/>
            <person name="Holt I.E."/>
            <person name="Eidhammer I."/>
            <person name="Jonasen I."/>
            <person name="Vanaken S."/>
            <person name="Utterback T.R."/>
            <person name="Feldblyum T.V."/>
            <person name="Fraser C.M."/>
            <person name="Lillehaug J.R."/>
            <person name="Eisen J.A."/>
        </authorList>
    </citation>
    <scope>NUCLEOTIDE SEQUENCE [LARGE SCALE GENOMIC DNA]</scope>
    <source>
        <strain>ATCC 33009 / NCIMB 11132 / Bath</strain>
    </source>
</reference>
<comment type="function">
    <text evidence="1">Part of the Tol-Pal system, which plays a role in outer membrane invagination during cell division and is important for maintaining outer membrane integrity.</text>
</comment>
<comment type="subunit">
    <text evidence="1">The Tol-Pal system is composed of five core proteins: the inner membrane proteins TolA, TolQ and TolR, the periplasmic protein TolB and the outer membrane protein Pal. They form a network linking the inner and outer membranes and the peptidoglycan layer.</text>
</comment>
<comment type="subcellular location">
    <subcellularLocation>
        <location evidence="1">Periplasm</location>
    </subcellularLocation>
</comment>
<comment type="similarity">
    <text evidence="1">Belongs to the TolB family.</text>
</comment>
<gene>
    <name evidence="1" type="primary">tolB</name>
    <name type="ordered locus">MCA1229</name>
</gene>
<sequence>MNKARAIARWISFLLLIAAGQVCAELQVQISQGVEGAIPVAVVPFANQGSLSDSLSQIVSADLQRSGRFRTLAESAMQERPTAPDQVQQAAWQALGQDFVVVGQIRPSGDGYEADFHVVDVIRGTLVVSYRLPFGRAETRQAAHRIADVIYKAITGEPGAFATRVAYVSVSGEGANRRYNLQVADTDGYNPQSVIVSNEPIMSPAWSPDGTKIAYVSFESRRSAIYVQTLATGERRKVSDAPGINGAPAFSPDGSRLALTLSKDGNPDIYVMNLGSGGLTRITDYSGIDTEPNWSRDGRSIVFTSDRGGKPQLYLVSASGGPAERLTYEGDYNARGVFSPDGRSLAMVHGKGGDYRIAVMDLASRAVRVLTSGPLDESPGFAPNGSMILYAARRGQLAAVSIDGKVRQSLRIEGGAVREPAWSP</sequence>
<name>TOLB_METCA</name>
<accession>Q609K4</accession>
<feature type="signal peptide" evidence="1">
    <location>
        <begin position="1"/>
        <end position="24"/>
    </location>
</feature>
<feature type="chain" id="PRO_0000034665" description="Tol-Pal system protein TolB" evidence="1">
    <location>
        <begin position="25"/>
        <end position="424"/>
    </location>
</feature>
<organism>
    <name type="scientific">Methylococcus capsulatus (strain ATCC 33009 / NCIMB 11132 / Bath)</name>
    <dbReference type="NCBI Taxonomy" id="243233"/>
    <lineage>
        <taxon>Bacteria</taxon>
        <taxon>Pseudomonadati</taxon>
        <taxon>Pseudomonadota</taxon>
        <taxon>Gammaproteobacteria</taxon>
        <taxon>Methylococcales</taxon>
        <taxon>Methylococcaceae</taxon>
        <taxon>Methylococcus</taxon>
    </lineage>
</organism>
<keyword id="KW-0131">Cell cycle</keyword>
<keyword id="KW-0132">Cell division</keyword>
<keyword id="KW-0574">Periplasm</keyword>
<keyword id="KW-1185">Reference proteome</keyword>
<keyword id="KW-0732">Signal</keyword>
<proteinExistence type="inferred from homology"/>